<feature type="chain" id="PRO_1000124386" description="Mannitol-1-phosphate 5-dehydrogenase">
    <location>
        <begin position="1"/>
        <end position="385"/>
    </location>
</feature>
<feature type="binding site" evidence="1">
    <location>
        <begin position="3"/>
        <end position="14"/>
    </location>
    <ligand>
        <name>NAD(+)</name>
        <dbReference type="ChEBI" id="CHEBI:57540"/>
    </ligand>
</feature>
<protein>
    <recommendedName>
        <fullName evidence="1">Mannitol-1-phosphate 5-dehydrogenase</fullName>
        <ecNumber evidence="1">1.1.1.17</ecNumber>
    </recommendedName>
</protein>
<sequence>MKALQFGAGNIGRGFIGKTLSESGFSVIFSDVNQNIVDAINYNREYFVKIIGSNQNKTVNIKRVSAINSNDSNIKKIISSVDLITTAVGPTALEKIALIITQGIIFKIKNQFTKPLNIIACENKIKSSSFLKQVVLKNLPIKYHDYLNKYIGFIDCSIDTIIPSINNKDDLFLTVEEFKEWIVNINQFKGAVPKIVDMKFSNNLDAFIERKLFTLNTGHAIAAYLGLIKNYKTIQDAISDKKIRVIVRSAMEESGSVLIKRYNFNKNDHLDYIEKIFLRFENPFLSDKLERIGRNPLQKLRREDRLIKPFLGAFEYNLPYSNLAKGIAAAFYYHNKNDLESIELSSSIKKQGLESTIIKICDLPVNSKEVYSIILEYNLIKKIIR</sequence>
<reference key="1">
    <citation type="journal article" date="2009" name="Science">
        <title>The dynamics and time scale of ongoing genomic erosion in symbiotic bacteria.</title>
        <authorList>
            <person name="Moran N.A."/>
            <person name="McLaughlin H.J."/>
            <person name="Sorek R."/>
        </authorList>
    </citation>
    <scope>NUCLEOTIDE SEQUENCE [LARGE SCALE GENOMIC DNA]</scope>
    <source>
        <strain>Tuc7</strain>
    </source>
</reference>
<keyword id="KW-0520">NAD</keyword>
<keyword id="KW-0560">Oxidoreductase</keyword>
<proteinExistence type="inferred from homology"/>
<comment type="catalytic activity">
    <reaction evidence="1">
        <text>D-mannitol 1-phosphate + NAD(+) = beta-D-fructose 6-phosphate + NADH + H(+)</text>
        <dbReference type="Rhea" id="RHEA:19661"/>
        <dbReference type="ChEBI" id="CHEBI:15378"/>
        <dbReference type="ChEBI" id="CHEBI:57540"/>
        <dbReference type="ChEBI" id="CHEBI:57634"/>
        <dbReference type="ChEBI" id="CHEBI:57945"/>
        <dbReference type="ChEBI" id="CHEBI:61381"/>
        <dbReference type="EC" id="1.1.1.17"/>
    </reaction>
</comment>
<comment type="similarity">
    <text evidence="1">Belongs to the mannitol dehydrogenase family.</text>
</comment>
<accession>B8D892</accession>
<dbReference type="EC" id="1.1.1.17" evidence="1"/>
<dbReference type="EMBL" id="CP001158">
    <property type="protein sequence ID" value="ACL30357.1"/>
    <property type="molecule type" value="Genomic_DNA"/>
</dbReference>
<dbReference type="RefSeq" id="WP_012619587.1">
    <property type="nucleotide sequence ID" value="NC_011834.1"/>
</dbReference>
<dbReference type="SMR" id="B8D892"/>
<dbReference type="KEGG" id="bau:BUAPTUC7_565"/>
<dbReference type="HOGENOM" id="CLU_036089_2_0_6"/>
<dbReference type="GO" id="GO:0005829">
    <property type="term" value="C:cytosol"/>
    <property type="evidence" value="ECO:0007669"/>
    <property type="project" value="TreeGrafter"/>
</dbReference>
<dbReference type="GO" id="GO:0008926">
    <property type="term" value="F:mannitol-1-phosphate 5-dehydrogenase activity"/>
    <property type="evidence" value="ECO:0007669"/>
    <property type="project" value="UniProtKB-UniRule"/>
</dbReference>
<dbReference type="GO" id="GO:0019592">
    <property type="term" value="P:mannitol catabolic process"/>
    <property type="evidence" value="ECO:0007669"/>
    <property type="project" value="TreeGrafter"/>
</dbReference>
<dbReference type="Gene3D" id="1.10.1040.10">
    <property type="entry name" value="N-(1-d-carboxylethyl)-l-norvaline Dehydrogenase, domain 2"/>
    <property type="match status" value="1"/>
</dbReference>
<dbReference type="Gene3D" id="3.40.50.720">
    <property type="entry name" value="NAD(P)-binding Rossmann-like Domain"/>
    <property type="match status" value="1"/>
</dbReference>
<dbReference type="HAMAP" id="MF_00196">
    <property type="entry name" value="Mannitol_dehydrog"/>
    <property type="match status" value="1"/>
</dbReference>
<dbReference type="InterPro" id="IPR008927">
    <property type="entry name" value="6-PGluconate_DH-like_C_sf"/>
</dbReference>
<dbReference type="InterPro" id="IPR013328">
    <property type="entry name" value="6PGD_dom2"/>
</dbReference>
<dbReference type="InterPro" id="IPR023028">
    <property type="entry name" value="Mannitol_1_phos_5_DH"/>
</dbReference>
<dbReference type="InterPro" id="IPR000669">
    <property type="entry name" value="Mannitol_DH"/>
</dbReference>
<dbReference type="InterPro" id="IPR013118">
    <property type="entry name" value="Mannitol_DH_C"/>
</dbReference>
<dbReference type="InterPro" id="IPR013131">
    <property type="entry name" value="Mannitol_DH_N"/>
</dbReference>
<dbReference type="InterPro" id="IPR036291">
    <property type="entry name" value="NAD(P)-bd_dom_sf"/>
</dbReference>
<dbReference type="NCBIfam" id="NF002646">
    <property type="entry name" value="PRK02318.1-2"/>
    <property type="match status" value="1"/>
</dbReference>
<dbReference type="NCBIfam" id="NF002650">
    <property type="entry name" value="PRK02318.2-2"/>
    <property type="match status" value="1"/>
</dbReference>
<dbReference type="NCBIfam" id="NF002652">
    <property type="entry name" value="PRK02318.2-5"/>
    <property type="match status" value="1"/>
</dbReference>
<dbReference type="PANTHER" id="PTHR30524:SF0">
    <property type="entry name" value="ALTRONATE OXIDOREDUCTASE-RELATED"/>
    <property type="match status" value="1"/>
</dbReference>
<dbReference type="PANTHER" id="PTHR30524">
    <property type="entry name" value="MANNITOL-1-PHOSPHATE 5-DEHYDROGENASE"/>
    <property type="match status" value="1"/>
</dbReference>
<dbReference type="Pfam" id="PF01232">
    <property type="entry name" value="Mannitol_dh"/>
    <property type="match status" value="1"/>
</dbReference>
<dbReference type="Pfam" id="PF08125">
    <property type="entry name" value="Mannitol_dh_C"/>
    <property type="match status" value="1"/>
</dbReference>
<dbReference type="PRINTS" id="PR00084">
    <property type="entry name" value="MTLDHDRGNASE"/>
</dbReference>
<dbReference type="SUPFAM" id="SSF48179">
    <property type="entry name" value="6-phosphogluconate dehydrogenase C-terminal domain-like"/>
    <property type="match status" value="1"/>
</dbReference>
<dbReference type="SUPFAM" id="SSF51735">
    <property type="entry name" value="NAD(P)-binding Rossmann-fold domains"/>
    <property type="match status" value="1"/>
</dbReference>
<organism>
    <name type="scientific">Buchnera aphidicola subsp. Acyrthosiphon pisum (strain Tuc7)</name>
    <dbReference type="NCBI Taxonomy" id="561501"/>
    <lineage>
        <taxon>Bacteria</taxon>
        <taxon>Pseudomonadati</taxon>
        <taxon>Pseudomonadota</taxon>
        <taxon>Gammaproteobacteria</taxon>
        <taxon>Enterobacterales</taxon>
        <taxon>Erwiniaceae</taxon>
        <taxon>Buchnera</taxon>
    </lineage>
</organism>
<name>MTLD_BUCAT</name>
<evidence type="ECO:0000255" key="1">
    <source>
        <dbReference type="HAMAP-Rule" id="MF_00196"/>
    </source>
</evidence>
<gene>
    <name evidence="1" type="primary">mtlD</name>
    <name type="ordered locus">BUAPTUC7_565</name>
</gene>